<dbReference type="EC" id="1.17.4.1"/>
<dbReference type="EMBL" id="AE013599">
    <property type="protein sequence ID" value="AAF58599.2"/>
    <property type="molecule type" value="Genomic_DNA"/>
</dbReference>
<dbReference type="EMBL" id="AY051936">
    <property type="protein sequence ID" value="AAK93360.1"/>
    <property type="molecule type" value="mRNA"/>
</dbReference>
<dbReference type="EMBL" id="U09370">
    <property type="protein sequence ID" value="AAA56996.1"/>
    <property type="molecule type" value="Genomic_DNA"/>
</dbReference>
<dbReference type="RefSeq" id="NP_525111.1">
    <property type="nucleotide sequence ID" value="NM_080372.4"/>
</dbReference>
<dbReference type="SMR" id="P48592"/>
<dbReference type="BioGRID" id="62064">
    <property type="interactions" value="12"/>
</dbReference>
<dbReference type="DIP" id="DIP-18112N"/>
<dbReference type="FunCoup" id="P48592">
    <property type="interactions" value="624"/>
</dbReference>
<dbReference type="IntAct" id="P48592">
    <property type="interactions" value="107"/>
</dbReference>
<dbReference type="MINT" id="P48592"/>
<dbReference type="STRING" id="7227.FBpp0087152"/>
<dbReference type="iPTMnet" id="P48592"/>
<dbReference type="PaxDb" id="7227-FBpp0087152"/>
<dbReference type="DNASU" id="36280"/>
<dbReference type="EnsemblMetazoa" id="FBtr0088046">
    <property type="protein sequence ID" value="FBpp0087152"/>
    <property type="gene ID" value="FBgn0011704"/>
</dbReference>
<dbReference type="GeneID" id="36280"/>
<dbReference type="KEGG" id="dme:Dmel_CG8975"/>
<dbReference type="AGR" id="FB:FBgn0011704"/>
<dbReference type="CTD" id="36280"/>
<dbReference type="FlyBase" id="FBgn0011704">
    <property type="gene designation" value="RnrS"/>
</dbReference>
<dbReference type="VEuPathDB" id="VectorBase:FBgn0011704"/>
<dbReference type="eggNOG" id="KOG1567">
    <property type="taxonomic scope" value="Eukaryota"/>
</dbReference>
<dbReference type="GeneTree" id="ENSGT00390000013305"/>
<dbReference type="HOGENOM" id="CLU_035339_2_1_1"/>
<dbReference type="InParanoid" id="P48592"/>
<dbReference type="OMA" id="SNPFPWM"/>
<dbReference type="OrthoDB" id="10248373at2759"/>
<dbReference type="PhylomeDB" id="P48592"/>
<dbReference type="Reactome" id="R-DME-499943">
    <property type="pathway name" value="Interconversion of nucleotide di- and triphosphates"/>
</dbReference>
<dbReference type="BioGRID-ORCS" id="36280">
    <property type="hits" value="2 hits in 3 CRISPR screens"/>
</dbReference>
<dbReference type="ChiTaRS" id="RnrS">
    <property type="organism name" value="fly"/>
</dbReference>
<dbReference type="GenomeRNAi" id="36280"/>
<dbReference type="PRO" id="PR:P48592"/>
<dbReference type="Proteomes" id="UP000000803">
    <property type="component" value="Chromosome 2R"/>
</dbReference>
<dbReference type="Bgee" id="FBgn0011704">
    <property type="expression patterns" value="Expressed in secondary oocyte and 96 other cell types or tissues"/>
</dbReference>
<dbReference type="GO" id="GO:0005829">
    <property type="term" value="C:cytosol"/>
    <property type="evidence" value="ECO:0000318"/>
    <property type="project" value="GO_Central"/>
</dbReference>
<dbReference type="GO" id="GO:0005971">
    <property type="term" value="C:ribonucleoside-diphosphate reductase complex"/>
    <property type="evidence" value="ECO:0000250"/>
    <property type="project" value="FlyBase"/>
</dbReference>
<dbReference type="GO" id="GO:0046872">
    <property type="term" value="F:metal ion binding"/>
    <property type="evidence" value="ECO:0007669"/>
    <property type="project" value="UniProtKB-KW"/>
</dbReference>
<dbReference type="GO" id="GO:0004748">
    <property type="term" value="F:ribonucleoside-diphosphate reductase activity, thioredoxin disulfide as acceptor"/>
    <property type="evidence" value="ECO:0000250"/>
    <property type="project" value="FlyBase"/>
</dbReference>
<dbReference type="GO" id="GO:0009263">
    <property type="term" value="P:deoxyribonucleotide biosynthetic process"/>
    <property type="evidence" value="ECO:0000318"/>
    <property type="project" value="GO_Central"/>
</dbReference>
<dbReference type="CDD" id="cd01049">
    <property type="entry name" value="RNRR2"/>
    <property type="match status" value="1"/>
</dbReference>
<dbReference type="FunFam" id="1.10.620.20:FF:000004">
    <property type="entry name" value="Ribonucleoside-diphosphate reductase subunit M2 B"/>
    <property type="match status" value="1"/>
</dbReference>
<dbReference type="Gene3D" id="1.10.620.20">
    <property type="entry name" value="Ribonucleotide Reductase, subunit A"/>
    <property type="match status" value="1"/>
</dbReference>
<dbReference type="InterPro" id="IPR009078">
    <property type="entry name" value="Ferritin-like_SF"/>
</dbReference>
<dbReference type="InterPro" id="IPR012348">
    <property type="entry name" value="RNR-like"/>
</dbReference>
<dbReference type="InterPro" id="IPR033909">
    <property type="entry name" value="RNR_small"/>
</dbReference>
<dbReference type="InterPro" id="IPR030475">
    <property type="entry name" value="RNR_small_AS"/>
</dbReference>
<dbReference type="InterPro" id="IPR000358">
    <property type="entry name" value="RNR_small_fam"/>
</dbReference>
<dbReference type="PANTHER" id="PTHR23409">
    <property type="entry name" value="RIBONUCLEOSIDE-DIPHOSPHATE REDUCTASE SMALL CHAIN"/>
    <property type="match status" value="1"/>
</dbReference>
<dbReference type="PANTHER" id="PTHR23409:SF18">
    <property type="entry name" value="RIBONUCLEOSIDE-DIPHOSPHATE REDUCTASE SUBUNIT M2"/>
    <property type="match status" value="1"/>
</dbReference>
<dbReference type="Pfam" id="PF00268">
    <property type="entry name" value="Ribonuc_red_sm"/>
    <property type="match status" value="1"/>
</dbReference>
<dbReference type="SUPFAM" id="SSF47240">
    <property type="entry name" value="Ferritin-like"/>
    <property type="match status" value="1"/>
</dbReference>
<dbReference type="PROSITE" id="PS00368">
    <property type="entry name" value="RIBORED_SMALL"/>
    <property type="match status" value="1"/>
</dbReference>
<protein>
    <recommendedName>
        <fullName>Ribonucleoside-diphosphate reductase subunit M2</fullName>
        <ecNumber>1.17.4.1</ecNumber>
    </recommendedName>
    <alternativeName>
        <fullName>Ribonucleotide reductase small subunit</fullName>
    </alternativeName>
</protein>
<evidence type="ECO:0000250" key="1"/>
<evidence type="ECO:0000255" key="2">
    <source>
        <dbReference type="PROSITE-ProRule" id="PRU10014"/>
    </source>
</evidence>
<evidence type="ECO:0000269" key="3">
    <source>
    </source>
</evidence>
<evidence type="ECO:0000305" key="4"/>
<gene>
    <name type="primary">RnrS</name>
    <name type="ORF">CG8975</name>
</gene>
<reference key="1">
    <citation type="journal article" date="2000" name="Science">
        <title>The genome sequence of Drosophila melanogaster.</title>
        <authorList>
            <person name="Adams M.D."/>
            <person name="Celniker S.E."/>
            <person name="Holt R.A."/>
            <person name="Evans C.A."/>
            <person name="Gocayne J.D."/>
            <person name="Amanatides P.G."/>
            <person name="Scherer S.E."/>
            <person name="Li P.W."/>
            <person name="Hoskins R.A."/>
            <person name="Galle R.F."/>
            <person name="George R.A."/>
            <person name="Lewis S.E."/>
            <person name="Richards S."/>
            <person name="Ashburner M."/>
            <person name="Henderson S.N."/>
            <person name="Sutton G.G."/>
            <person name="Wortman J.R."/>
            <person name="Yandell M.D."/>
            <person name="Zhang Q."/>
            <person name="Chen L.X."/>
            <person name="Brandon R.C."/>
            <person name="Rogers Y.-H.C."/>
            <person name="Blazej R.G."/>
            <person name="Champe M."/>
            <person name="Pfeiffer B.D."/>
            <person name="Wan K.H."/>
            <person name="Doyle C."/>
            <person name="Baxter E.G."/>
            <person name="Helt G."/>
            <person name="Nelson C.R."/>
            <person name="Miklos G.L.G."/>
            <person name="Abril J.F."/>
            <person name="Agbayani A."/>
            <person name="An H.-J."/>
            <person name="Andrews-Pfannkoch C."/>
            <person name="Baldwin D."/>
            <person name="Ballew R.M."/>
            <person name="Basu A."/>
            <person name="Baxendale J."/>
            <person name="Bayraktaroglu L."/>
            <person name="Beasley E.M."/>
            <person name="Beeson K.Y."/>
            <person name="Benos P.V."/>
            <person name="Berman B.P."/>
            <person name="Bhandari D."/>
            <person name="Bolshakov S."/>
            <person name="Borkova D."/>
            <person name="Botchan M.R."/>
            <person name="Bouck J."/>
            <person name="Brokstein P."/>
            <person name="Brottier P."/>
            <person name="Burtis K.C."/>
            <person name="Busam D.A."/>
            <person name="Butler H."/>
            <person name="Cadieu E."/>
            <person name="Center A."/>
            <person name="Chandra I."/>
            <person name="Cherry J.M."/>
            <person name="Cawley S."/>
            <person name="Dahlke C."/>
            <person name="Davenport L.B."/>
            <person name="Davies P."/>
            <person name="de Pablos B."/>
            <person name="Delcher A."/>
            <person name="Deng Z."/>
            <person name="Mays A.D."/>
            <person name="Dew I."/>
            <person name="Dietz S.M."/>
            <person name="Dodson K."/>
            <person name="Doup L.E."/>
            <person name="Downes M."/>
            <person name="Dugan-Rocha S."/>
            <person name="Dunkov B.C."/>
            <person name="Dunn P."/>
            <person name="Durbin K.J."/>
            <person name="Evangelista C.C."/>
            <person name="Ferraz C."/>
            <person name="Ferriera S."/>
            <person name="Fleischmann W."/>
            <person name="Fosler C."/>
            <person name="Gabrielian A.E."/>
            <person name="Garg N.S."/>
            <person name="Gelbart W.M."/>
            <person name="Glasser K."/>
            <person name="Glodek A."/>
            <person name="Gong F."/>
            <person name="Gorrell J.H."/>
            <person name="Gu Z."/>
            <person name="Guan P."/>
            <person name="Harris M."/>
            <person name="Harris N.L."/>
            <person name="Harvey D.A."/>
            <person name="Heiman T.J."/>
            <person name="Hernandez J.R."/>
            <person name="Houck J."/>
            <person name="Hostin D."/>
            <person name="Houston K.A."/>
            <person name="Howland T.J."/>
            <person name="Wei M.-H."/>
            <person name="Ibegwam C."/>
            <person name="Jalali M."/>
            <person name="Kalush F."/>
            <person name="Karpen G.H."/>
            <person name="Ke Z."/>
            <person name="Kennison J.A."/>
            <person name="Ketchum K.A."/>
            <person name="Kimmel B.E."/>
            <person name="Kodira C.D."/>
            <person name="Kraft C.L."/>
            <person name="Kravitz S."/>
            <person name="Kulp D."/>
            <person name="Lai Z."/>
            <person name="Lasko P."/>
            <person name="Lei Y."/>
            <person name="Levitsky A.A."/>
            <person name="Li J.H."/>
            <person name="Li Z."/>
            <person name="Liang Y."/>
            <person name="Lin X."/>
            <person name="Liu X."/>
            <person name="Mattei B."/>
            <person name="McIntosh T.C."/>
            <person name="McLeod M.P."/>
            <person name="McPherson D."/>
            <person name="Merkulov G."/>
            <person name="Milshina N.V."/>
            <person name="Mobarry C."/>
            <person name="Morris J."/>
            <person name="Moshrefi A."/>
            <person name="Mount S.M."/>
            <person name="Moy M."/>
            <person name="Murphy B."/>
            <person name="Murphy L."/>
            <person name="Muzny D.M."/>
            <person name="Nelson D.L."/>
            <person name="Nelson D.R."/>
            <person name="Nelson K.A."/>
            <person name="Nixon K."/>
            <person name="Nusskern D.R."/>
            <person name="Pacleb J.M."/>
            <person name="Palazzolo M."/>
            <person name="Pittman G.S."/>
            <person name="Pan S."/>
            <person name="Pollard J."/>
            <person name="Puri V."/>
            <person name="Reese M.G."/>
            <person name="Reinert K."/>
            <person name="Remington K."/>
            <person name="Saunders R.D.C."/>
            <person name="Scheeler F."/>
            <person name="Shen H."/>
            <person name="Shue B.C."/>
            <person name="Siden-Kiamos I."/>
            <person name="Simpson M."/>
            <person name="Skupski M.P."/>
            <person name="Smith T.J."/>
            <person name="Spier E."/>
            <person name="Spradling A.C."/>
            <person name="Stapleton M."/>
            <person name="Strong R."/>
            <person name="Sun E."/>
            <person name="Svirskas R."/>
            <person name="Tector C."/>
            <person name="Turner R."/>
            <person name="Venter E."/>
            <person name="Wang A.H."/>
            <person name="Wang X."/>
            <person name="Wang Z.-Y."/>
            <person name="Wassarman D.A."/>
            <person name="Weinstock G.M."/>
            <person name="Weissenbach J."/>
            <person name="Williams S.M."/>
            <person name="Woodage T."/>
            <person name="Worley K.C."/>
            <person name="Wu D."/>
            <person name="Yang S."/>
            <person name="Yao Q.A."/>
            <person name="Ye J."/>
            <person name="Yeh R.-F."/>
            <person name="Zaveri J.S."/>
            <person name="Zhan M."/>
            <person name="Zhang G."/>
            <person name="Zhao Q."/>
            <person name="Zheng L."/>
            <person name="Zheng X.H."/>
            <person name="Zhong F.N."/>
            <person name="Zhong W."/>
            <person name="Zhou X."/>
            <person name="Zhu S.C."/>
            <person name="Zhu X."/>
            <person name="Smith H.O."/>
            <person name="Gibbs R.A."/>
            <person name="Myers E.W."/>
            <person name="Rubin G.M."/>
            <person name="Venter J.C."/>
        </authorList>
    </citation>
    <scope>NUCLEOTIDE SEQUENCE [LARGE SCALE GENOMIC DNA]</scope>
    <source>
        <strain>Berkeley</strain>
    </source>
</reference>
<reference key="2">
    <citation type="journal article" date="2002" name="Genome Biol.">
        <title>Annotation of the Drosophila melanogaster euchromatic genome: a systematic review.</title>
        <authorList>
            <person name="Misra S."/>
            <person name="Crosby M.A."/>
            <person name="Mungall C.J."/>
            <person name="Matthews B.B."/>
            <person name="Campbell K.S."/>
            <person name="Hradecky P."/>
            <person name="Huang Y."/>
            <person name="Kaminker J.S."/>
            <person name="Millburn G.H."/>
            <person name="Prochnik S.E."/>
            <person name="Smith C.D."/>
            <person name="Tupy J.L."/>
            <person name="Whitfield E.J."/>
            <person name="Bayraktaroglu L."/>
            <person name="Berman B.P."/>
            <person name="Bettencourt B.R."/>
            <person name="Celniker S.E."/>
            <person name="de Grey A.D.N.J."/>
            <person name="Drysdale R.A."/>
            <person name="Harris N.L."/>
            <person name="Richter J."/>
            <person name="Russo S."/>
            <person name="Schroeder A.J."/>
            <person name="Shu S.Q."/>
            <person name="Stapleton M."/>
            <person name="Yamada C."/>
            <person name="Ashburner M."/>
            <person name="Gelbart W.M."/>
            <person name="Rubin G.M."/>
            <person name="Lewis S.E."/>
        </authorList>
    </citation>
    <scope>GENOME REANNOTATION</scope>
    <source>
        <strain>Berkeley</strain>
    </source>
</reference>
<reference key="3">
    <citation type="journal article" date="2002" name="Genome Biol.">
        <title>A Drosophila full-length cDNA resource.</title>
        <authorList>
            <person name="Stapleton M."/>
            <person name="Carlson J.W."/>
            <person name="Brokstein P."/>
            <person name="Yu C."/>
            <person name="Champe M."/>
            <person name="George R.A."/>
            <person name="Guarin H."/>
            <person name="Kronmiller B."/>
            <person name="Pacleb J.M."/>
            <person name="Park S."/>
            <person name="Wan K.H."/>
            <person name="Rubin G.M."/>
            <person name="Celniker S.E."/>
        </authorList>
    </citation>
    <scope>NUCLEOTIDE SEQUENCE [LARGE SCALE MRNA]</scope>
    <source>
        <strain>Berkeley</strain>
        <tissue>Embryo</tissue>
    </source>
</reference>
<reference key="4">
    <citation type="journal article" date="1994" name="Development">
        <title>Developmental control of a G1-S transcriptional program in Drosophila.</title>
        <authorList>
            <person name="Duronio R.J."/>
            <person name="O'Farrell P.H."/>
        </authorList>
    </citation>
    <scope>NUCLEOTIDE SEQUENCE [GENOMIC DNA] OF 149-362</scope>
    <source>
        <strain>Oregon-R</strain>
    </source>
</reference>
<reference key="5">
    <citation type="journal article" date="2008" name="J. Proteome Res.">
        <title>Phosphoproteome analysis of Drosophila melanogaster embryos.</title>
        <authorList>
            <person name="Zhai B."/>
            <person name="Villen J."/>
            <person name="Beausoleil S.A."/>
            <person name="Mintseris J."/>
            <person name="Gygi S.P."/>
        </authorList>
    </citation>
    <scope>PHOSPHORYLATION [LARGE SCALE ANALYSIS] AT SER-18</scope>
    <scope>IDENTIFICATION BY MASS SPECTROMETRY</scope>
    <source>
        <tissue>Embryo</tissue>
    </source>
</reference>
<keyword id="KW-0963">Cytoplasm</keyword>
<keyword id="KW-0215">Deoxyribonucleotide synthesis</keyword>
<keyword id="KW-0408">Iron</keyword>
<keyword id="KW-0479">Metal-binding</keyword>
<keyword id="KW-0560">Oxidoreductase</keyword>
<keyword id="KW-0597">Phosphoprotein</keyword>
<keyword id="KW-1185">Reference proteome</keyword>
<comment type="function">
    <text>Provides the precursors necessary for DNA synthesis. Catalyzes the biosynthesis of deoxyribonucleotides from the corresponding ribonucleotides.</text>
</comment>
<comment type="catalytic activity">
    <reaction evidence="2">
        <text>a 2'-deoxyribonucleoside 5'-diphosphate + [thioredoxin]-disulfide + H2O = a ribonucleoside 5'-diphosphate + [thioredoxin]-dithiol</text>
        <dbReference type="Rhea" id="RHEA:23252"/>
        <dbReference type="Rhea" id="RHEA-COMP:10698"/>
        <dbReference type="Rhea" id="RHEA-COMP:10700"/>
        <dbReference type="ChEBI" id="CHEBI:15377"/>
        <dbReference type="ChEBI" id="CHEBI:29950"/>
        <dbReference type="ChEBI" id="CHEBI:50058"/>
        <dbReference type="ChEBI" id="CHEBI:57930"/>
        <dbReference type="ChEBI" id="CHEBI:73316"/>
        <dbReference type="EC" id="1.17.4.1"/>
    </reaction>
</comment>
<comment type="cofactor">
    <cofactor evidence="1">
        <name>Fe cation</name>
        <dbReference type="ChEBI" id="CHEBI:24875"/>
    </cofactor>
    <text evidence="1">Binds 2 iron ions per subunit.</text>
</comment>
<comment type="subunit">
    <text>Heterodimer of a large and a small subunit.</text>
</comment>
<comment type="subcellular location">
    <subcellularLocation>
        <location>Cytoplasm</location>
    </subcellularLocation>
</comment>
<comment type="similarity">
    <text evidence="4">Belongs to the ribonucleoside diphosphate reductase small chain family.</text>
</comment>
<feature type="chain" id="PRO_0000190454" description="Ribonucleoside-diphosphate reductase subunit M2">
    <location>
        <begin position="1"/>
        <end position="393"/>
    </location>
</feature>
<feature type="active site" evidence="2">
    <location>
        <position position="180"/>
    </location>
</feature>
<feature type="binding site" evidence="2">
    <location>
        <position position="142"/>
    </location>
    <ligand>
        <name>Fe cation</name>
        <dbReference type="ChEBI" id="CHEBI:24875"/>
        <label>1</label>
    </ligand>
</feature>
<feature type="binding site" evidence="2">
    <location>
        <position position="173"/>
    </location>
    <ligand>
        <name>Fe cation</name>
        <dbReference type="ChEBI" id="CHEBI:24875"/>
        <label>1</label>
    </ligand>
</feature>
<feature type="binding site" evidence="1">
    <location>
        <position position="173"/>
    </location>
    <ligand>
        <name>Fe cation</name>
        <dbReference type="ChEBI" id="CHEBI:24875"/>
        <label>2</label>
    </ligand>
</feature>
<feature type="binding site" evidence="2">
    <location>
        <position position="176"/>
    </location>
    <ligand>
        <name>Fe cation</name>
        <dbReference type="ChEBI" id="CHEBI:24875"/>
        <label>1</label>
    </ligand>
</feature>
<feature type="binding site" evidence="1">
    <location>
        <position position="236"/>
    </location>
    <ligand>
        <name>Fe cation</name>
        <dbReference type="ChEBI" id="CHEBI:24875"/>
        <label>2</label>
    </ligand>
</feature>
<feature type="binding site" evidence="1">
    <location>
        <position position="270"/>
    </location>
    <ligand>
        <name>Fe cation</name>
        <dbReference type="ChEBI" id="CHEBI:24875"/>
        <label>2</label>
    </ligand>
</feature>
<feature type="binding site" evidence="1">
    <location>
        <position position="273"/>
    </location>
    <ligand>
        <name>Fe cation</name>
        <dbReference type="ChEBI" id="CHEBI:24875"/>
        <label>2</label>
    </ligand>
</feature>
<feature type="modified residue" description="Phosphoserine" evidence="3">
    <location>
        <position position="18"/>
    </location>
</feature>
<organism>
    <name type="scientific">Drosophila melanogaster</name>
    <name type="common">Fruit fly</name>
    <dbReference type="NCBI Taxonomy" id="7227"/>
    <lineage>
        <taxon>Eukaryota</taxon>
        <taxon>Metazoa</taxon>
        <taxon>Ecdysozoa</taxon>
        <taxon>Arthropoda</taxon>
        <taxon>Hexapoda</taxon>
        <taxon>Insecta</taxon>
        <taxon>Pterygota</taxon>
        <taxon>Neoptera</taxon>
        <taxon>Endopterygota</taxon>
        <taxon>Diptera</taxon>
        <taxon>Brachycera</taxon>
        <taxon>Muscomorpha</taxon>
        <taxon>Ephydroidea</taxon>
        <taxon>Drosophilidae</taxon>
        <taxon>Drosophila</taxon>
        <taxon>Sophophora</taxon>
    </lineage>
</organism>
<accession>P48592</accession>
<accession>Q9V640</accession>
<sequence length="393" mass="45115">MASKENIADNMEKFSLKSPSKKILTDSTNNVRKMSIGHEANGQLAKESSTVNGIGKSANSLMEKSVTPFDPSLEPLLRENPRRFVIFPIQYHDIWQMYKKAEASFWTVEEVDLSKDLTDWHRLKDDERHFISHVLAFFAASDGIVNENLVERFSQEVQITEARCFYGFQIAMENVHSEMYSVLIDTYIRDPHQREYLFNAIETMPAVKRKADWALSWISSKSANFGERIIAFAAVEGIFFSGSFASIFWLKKRGLMPGLTFSNELISRDEGLHCDFAVLMFQHLVQRPKRERIIEIIRDAVAIEQEFLTDALPVNLIGMNCDLMSQYIEFVADRLLVELGVGKIYNTKNPFNFMEMISLDGKTNFFEKKVGEYQRMGVVSNPLDNVFTLDADF</sequence>
<name>RIR2_DROME</name>
<proteinExistence type="evidence at protein level"/>